<name>KDPC_MYCTA</name>
<gene>
    <name evidence="1" type="primary">kdpC</name>
    <name type="ordered locus">MRA_1039</name>
</gene>
<sequence>MRRQLLPALTMLLVFTVITGIVYPLAVTGVGQLFFGDQANGALLERDGQVIGSAHIGQQFTAAKYFHPRPSSAGDGYDAAASSGSNLGPTNEKLLAAVAERVTAYRKENNLPADTLVPVDAVTGSGSGLDPAISVVNAKLQAPRVAQARNISIRQVERLIEDHTDARGLGFLGERAVNVLRLNLALDRL</sequence>
<protein>
    <recommendedName>
        <fullName evidence="1">Potassium-transporting ATPase KdpC subunit</fullName>
    </recommendedName>
    <alternativeName>
        <fullName evidence="1">ATP phosphohydrolase [potassium-transporting] C chain</fullName>
    </alternativeName>
    <alternativeName>
        <fullName evidence="1">Potassium-binding and translocating subunit C</fullName>
    </alternativeName>
    <alternativeName>
        <fullName evidence="1">Potassium-translocating ATPase C chain</fullName>
    </alternativeName>
</protein>
<organism>
    <name type="scientific">Mycobacterium tuberculosis (strain ATCC 25177 / H37Ra)</name>
    <dbReference type="NCBI Taxonomy" id="419947"/>
    <lineage>
        <taxon>Bacteria</taxon>
        <taxon>Bacillati</taxon>
        <taxon>Actinomycetota</taxon>
        <taxon>Actinomycetes</taxon>
        <taxon>Mycobacteriales</taxon>
        <taxon>Mycobacteriaceae</taxon>
        <taxon>Mycobacterium</taxon>
        <taxon>Mycobacterium tuberculosis complex</taxon>
    </lineage>
</organism>
<feature type="chain" id="PRO_1000022296" description="Potassium-transporting ATPase KdpC subunit">
    <location>
        <begin position="1"/>
        <end position="189"/>
    </location>
</feature>
<feature type="transmembrane region" description="Helical" evidence="1">
    <location>
        <begin position="5"/>
        <end position="25"/>
    </location>
</feature>
<accession>A5U175</accession>
<proteinExistence type="inferred from homology"/>
<evidence type="ECO:0000255" key="1">
    <source>
        <dbReference type="HAMAP-Rule" id="MF_00276"/>
    </source>
</evidence>
<comment type="function">
    <text evidence="1">Part of the high-affinity ATP-driven potassium transport (or Kdp) system, which catalyzes the hydrolysis of ATP coupled with the electrogenic transport of potassium into the cytoplasm. This subunit acts as a catalytic chaperone that increases the ATP-binding affinity of the ATP-hydrolyzing subunit KdpB by the formation of a transient KdpB/KdpC/ATP ternary complex.</text>
</comment>
<comment type="subunit">
    <text evidence="1">The system is composed of three essential subunits: KdpA, KdpB and KdpC.</text>
</comment>
<comment type="subcellular location">
    <subcellularLocation>
        <location evidence="1">Cell membrane</location>
        <topology evidence="1">Single-pass membrane protein</topology>
    </subcellularLocation>
</comment>
<comment type="similarity">
    <text evidence="1">Belongs to the KdpC family.</text>
</comment>
<reference key="1">
    <citation type="journal article" date="2008" name="PLoS ONE">
        <title>Genetic basis of virulence attenuation revealed by comparative genomic analysis of Mycobacterium tuberculosis strain H37Ra versus H37Rv.</title>
        <authorList>
            <person name="Zheng H."/>
            <person name="Lu L."/>
            <person name="Wang B."/>
            <person name="Pu S."/>
            <person name="Zhang X."/>
            <person name="Zhu G."/>
            <person name="Shi W."/>
            <person name="Zhang L."/>
            <person name="Wang H."/>
            <person name="Wang S."/>
            <person name="Zhao G."/>
            <person name="Zhang Y."/>
        </authorList>
    </citation>
    <scope>NUCLEOTIDE SEQUENCE [LARGE SCALE GENOMIC DNA]</scope>
    <source>
        <strain>ATCC 25177 / H37Ra</strain>
    </source>
</reference>
<dbReference type="EMBL" id="CP000611">
    <property type="protein sequence ID" value="ABQ72775.1"/>
    <property type="molecule type" value="Genomic_DNA"/>
</dbReference>
<dbReference type="RefSeq" id="WP_003405322.1">
    <property type="nucleotide sequence ID" value="NZ_CP016972.1"/>
</dbReference>
<dbReference type="SMR" id="A5U175"/>
<dbReference type="KEGG" id="mra:MRA_1039"/>
<dbReference type="eggNOG" id="COG2156">
    <property type="taxonomic scope" value="Bacteria"/>
</dbReference>
<dbReference type="HOGENOM" id="CLU_077094_2_0_11"/>
<dbReference type="Proteomes" id="UP000001988">
    <property type="component" value="Chromosome"/>
</dbReference>
<dbReference type="GO" id="GO:0005886">
    <property type="term" value="C:plasma membrane"/>
    <property type="evidence" value="ECO:0007669"/>
    <property type="project" value="UniProtKB-SubCell"/>
</dbReference>
<dbReference type="GO" id="GO:0005524">
    <property type="term" value="F:ATP binding"/>
    <property type="evidence" value="ECO:0007669"/>
    <property type="project" value="UniProtKB-UniRule"/>
</dbReference>
<dbReference type="GO" id="GO:0008556">
    <property type="term" value="F:P-type potassium transmembrane transporter activity"/>
    <property type="evidence" value="ECO:0007669"/>
    <property type="project" value="InterPro"/>
</dbReference>
<dbReference type="HAMAP" id="MF_00276">
    <property type="entry name" value="KdpC"/>
    <property type="match status" value="1"/>
</dbReference>
<dbReference type="InterPro" id="IPR003820">
    <property type="entry name" value="KdpC"/>
</dbReference>
<dbReference type="NCBIfam" id="TIGR00681">
    <property type="entry name" value="kdpC"/>
    <property type="match status" value="1"/>
</dbReference>
<dbReference type="NCBIfam" id="NF001454">
    <property type="entry name" value="PRK00315.1"/>
    <property type="match status" value="1"/>
</dbReference>
<dbReference type="NCBIfam" id="NF010605">
    <property type="entry name" value="PRK14001.1"/>
    <property type="match status" value="1"/>
</dbReference>
<dbReference type="PANTHER" id="PTHR30042">
    <property type="entry name" value="POTASSIUM-TRANSPORTING ATPASE C CHAIN"/>
    <property type="match status" value="1"/>
</dbReference>
<dbReference type="PANTHER" id="PTHR30042:SF2">
    <property type="entry name" value="POTASSIUM-TRANSPORTING ATPASE KDPC SUBUNIT"/>
    <property type="match status" value="1"/>
</dbReference>
<dbReference type="Pfam" id="PF02669">
    <property type="entry name" value="KdpC"/>
    <property type="match status" value="1"/>
</dbReference>
<dbReference type="PIRSF" id="PIRSF001296">
    <property type="entry name" value="K_ATPase_KdpC"/>
    <property type="match status" value="1"/>
</dbReference>
<keyword id="KW-0067">ATP-binding</keyword>
<keyword id="KW-1003">Cell membrane</keyword>
<keyword id="KW-0406">Ion transport</keyword>
<keyword id="KW-0472">Membrane</keyword>
<keyword id="KW-0547">Nucleotide-binding</keyword>
<keyword id="KW-0630">Potassium</keyword>
<keyword id="KW-0633">Potassium transport</keyword>
<keyword id="KW-1185">Reference proteome</keyword>
<keyword id="KW-0812">Transmembrane</keyword>
<keyword id="KW-1133">Transmembrane helix</keyword>
<keyword id="KW-0813">Transport</keyword>